<sequence length="250" mass="28466">MLMRQKGIIIKAVDYGESDKIITILNEHGAKVPLMARRAKKVKTGLQAQTQLFVYGLFIYNQWRGMGTLNSVDVISQHYKLQMDLYVSSYASLAAETIERSMDEGDIAPYNYQLLQFVLEKIESGTSAQLMSVVVMLKCMKRFGFTASFNRCAVSGNDTQADLIGYSFKFDGAISRQEASKDVHAVILSNKTLYLLDVLQKLPIDKMNSLNIHQEIIDEMSDIILMLYREYAGMFFKSQKLINQLKRLEQ</sequence>
<keyword id="KW-0227">DNA damage</keyword>
<keyword id="KW-0233">DNA recombination</keyword>
<keyword id="KW-0234">DNA repair</keyword>
<protein>
    <recommendedName>
        <fullName evidence="1">DNA repair protein RecO</fullName>
    </recommendedName>
    <alternativeName>
        <fullName evidence="1">Recombination protein O</fullName>
    </alternativeName>
</protein>
<dbReference type="EMBL" id="BA000017">
    <property type="protein sequence ID" value="BAB57728.1"/>
    <property type="molecule type" value="Genomic_DNA"/>
</dbReference>
<dbReference type="SMR" id="P65985"/>
<dbReference type="KEGG" id="sav:SAV1566"/>
<dbReference type="HOGENOM" id="CLU_066632_4_0_9"/>
<dbReference type="PhylomeDB" id="P65985"/>
<dbReference type="Proteomes" id="UP000002481">
    <property type="component" value="Chromosome"/>
</dbReference>
<dbReference type="GO" id="GO:0043590">
    <property type="term" value="C:bacterial nucleoid"/>
    <property type="evidence" value="ECO:0007669"/>
    <property type="project" value="TreeGrafter"/>
</dbReference>
<dbReference type="GO" id="GO:0006310">
    <property type="term" value="P:DNA recombination"/>
    <property type="evidence" value="ECO:0007669"/>
    <property type="project" value="UniProtKB-UniRule"/>
</dbReference>
<dbReference type="GO" id="GO:0006302">
    <property type="term" value="P:double-strand break repair"/>
    <property type="evidence" value="ECO:0007669"/>
    <property type="project" value="TreeGrafter"/>
</dbReference>
<dbReference type="Gene3D" id="2.40.50.140">
    <property type="entry name" value="Nucleic acid-binding proteins"/>
    <property type="match status" value="1"/>
</dbReference>
<dbReference type="Gene3D" id="1.20.1440.120">
    <property type="entry name" value="Recombination protein O, C-terminal domain"/>
    <property type="match status" value="1"/>
</dbReference>
<dbReference type="HAMAP" id="MF_00201">
    <property type="entry name" value="RecO"/>
    <property type="match status" value="1"/>
</dbReference>
<dbReference type="InterPro" id="IPR037278">
    <property type="entry name" value="ARFGAP/RecO"/>
</dbReference>
<dbReference type="InterPro" id="IPR022572">
    <property type="entry name" value="DNA_rep/recomb_RecO_N"/>
</dbReference>
<dbReference type="InterPro" id="IPR012340">
    <property type="entry name" value="NA-bd_OB-fold"/>
</dbReference>
<dbReference type="InterPro" id="IPR003717">
    <property type="entry name" value="RecO"/>
</dbReference>
<dbReference type="InterPro" id="IPR042242">
    <property type="entry name" value="RecO_C"/>
</dbReference>
<dbReference type="NCBIfam" id="TIGR00613">
    <property type="entry name" value="reco"/>
    <property type="match status" value="1"/>
</dbReference>
<dbReference type="PANTHER" id="PTHR33991">
    <property type="entry name" value="DNA REPAIR PROTEIN RECO"/>
    <property type="match status" value="1"/>
</dbReference>
<dbReference type="PANTHER" id="PTHR33991:SF1">
    <property type="entry name" value="DNA REPAIR PROTEIN RECO"/>
    <property type="match status" value="1"/>
</dbReference>
<dbReference type="Pfam" id="PF02565">
    <property type="entry name" value="RecO_C"/>
    <property type="match status" value="1"/>
</dbReference>
<dbReference type="Pfam" id="PF11967">
    <property type="entry name" value="RecO_N"/>
    <property type="match status" value="1"/>
</dbReference>
<dbReference type="SUPFAM" id="SSF57863">
    <property type="entry name" value="ArfGap/RecO-like zinc finger"/>
    <property type="match status" value="1"/>
</dbReference>
<dbReference type="SUPFAM" id="SSF50249">
    <property type="entry name" value="Nucleic acid-binding proteins"/>
    <property type="match status" value="1"/>
</dbReference>
<comment type="function">
    <text evidence="1">Involved in DNA repair and RecF pathway recombination.</text>
</comment>
<comment type="similarity">
    <text evidence="1">Belongs to the RecO family.</text>
</comment>
<gene>
    <name evidence="1" type="primary">recO</name>
    <name type="ordered locus">SAV1566</name>
</gene>
<feature type="chain" id="PRO_0000204996" description="DNA repair protein RecO">
    <location>
        <begin position="1"/>
        <end position="250"/>
    </location>
</feature>
<reference key="1">
    <citation type="journal article" date="2001" name="Lancet">
        <title>Whole genome sequencing of meticillin-resistant Staphylococcus aureus.</title>
        <authorList>
            <person name="Kuroda M."/>
            <person name="Ohta T."/>
            <person name="Uchiyama I."/>
            <person name="Baba T."/>
            <person name="Yuzawa H."/>
            <person name="Kobayashi I."/>
            <person name="Cui L."/>
            <person name="Oguchi A."/>
            <person name="Aoki K."/>
            <person name="Nagai Y."/>
            <person name="Lian J.-Q."/>
            <person name="Ito T."/>
            <person name="Kanamori M."/>
            <person name="Matsumaru H."/>
            <person name="Maruyama A."/>
            <person name="Murakami H."/>
            <person name="Hosoyama A."/>
            <person name="Mizutani-Ui Y."/>
            <person name="Takahashi N.K."/>
            <person name="Sawano T."/>
            <person name="Inoue R."/>
            <person name="Kaito C."/>
            <person name="Sekimizu K."/>
            <person name="Hirakawa H."/>
            <person name="Kuhara S."/>
            <person name="Goto S."/>
            <person name="Yabuzaki J."/>
            <person name="Kanehisa M."/>
            <person name="Yamashita A."/>
            <person name="Oshima K."/>
            <person name="Furuya K."/>
            <person name="Yoshino C."/>
            <person name="Shiba T."/>
            <person name="Hattori M."/>
            <person name="Ogasawara N."/>
            <person name="Hayashi H."/>
            <person name="Hiramatsu K."/>
        </authorList>
    </citation>
    <scope>NUCLEOTIDE SEQUENCE [LARGE SCALE GENOMIC DNA]</scope>
    <source>
        <strain>Mu50 / ATCC 700699</strain>
    </source>
</reference>
<evidence type="ECO:0000255" key="1">
    <source>
        <dbReference type="HAMAP-Rule" id="MF_00201"/>
    </source>
</evidence>
<proteinExistence type="inferred from homology"/>
<accession>P65985</accession>
<accession>Q99TT0</accession>
<name>RECO_STAAM</name>
<organism>
    <name type="scientific">Staphylococcus aureus (strain Mu50 / ATCC 700699)</name>
    <dbReference type="NCBI Taxonomy" id="158878"/>
    <lineage>
        <taxon>Bacteria</taxon>
        <taxon>Bacillati</taxon>
        <taxon>Bacillota</taxon>
        <taxon>Bacilli</taxon>
        <taxon>Bacillales</taxon>
        <taxon>Staphylococcaceae</taxon>
        <taxon>Staphylococcus</taxon>
    </lineage>
</organism>